<keyword id="KW-0158">Chromosome</keyword>
<keyword id="KW-0238">DNA-binding</keyword>
<keyword id="KW-0539">Nucleus</keyword>
<keyword id="KW-1185">Reference proteome</keyword>
<organism>
    <name type="scientific">Strongylocentrotus purpuratus</name>
    <name type="common">Purple sea urchin</name>
    <dbReference type="NCBI Taxonomy" id="7668"/>
    <lineage>
        <taxon>Eukaryota</taxon>
        <taxon>Metazoa</taxon>
        <taxon>Echinodermata</taxon>
        <taxon>Eleutherozoa</taxon>
        <taxon>Echinozoa</taxon>
        <taxon>Echinoidea</taxon>
        <taxon>Euechinoidea</taxon>
        <taxon>Echinacea</taxon>
        <taxon>Camarodonta</taxon>
        <taxon>Echinidea</taxon>
        <taxon>Strongylocentrotidae</taxon>
        <taxon>Strongylocentrotus</taxon>
    </lineage>
</organism>
<sequence length="217" mass="22659">MSAAKPKVAKKARVAPAHPPSSQMVVAAVTALKERGGSSTQAIKKYIAANYTVDMTKQGPFIRRALVKGVASGALVQTKGKGASGSFKLGKKKEGKSDAQKARIAAKKAKLAAKKKEQREKKALKTKARKEKVAAKKAAKKATKKTKKVKKPAAKKAKKPAAKKPAAKKPAAKKAKKPAKKVAKPAKKAAAKPAKKAAKPAKKAAKPAKKAAKPAKK</sequence>
<feature type="chain" id="PRO_0000195947" description="Histone H1-gamma, late">
    <location>
        <begin position="1"/>
        <end position="217"/>
    </location>
</feature>
<feature type="domain" description="H15" evidence="1">
    <location>
        <begin position="17"/>
        <end position="91"/>
    </location>
</feature>
<feature type="region of interest" description="Disordered" evidence="2">
    <location>
        <begin position="1"/>
        <end position="21"/>
    </location>
</feature>
<feature type="region of interest" description="Disordered" evidence="2">
    <location>
        <begin position="80"/>
        <end position="217"/>
    </location>
</feature>
<feature type="compositionally biased region" description="Basic residues" evidence="2">
    <location>
        <begin position="104"/>
        <end position="113"/>
    </location>
</feature>
<feature type="compositionally biased region" description="Basic and acidic residues" evidence="2">
    <location>
        <begin position="114"/>
        <end position="123"/>
    </location>
</feature>
<feature type="compositionally biased region" description="Basic residues" evidence="2">
    <location>
        <begin position="124"/>
        <end position="217"/>
    </location>
</feature>
<name>H1G_STRPU</name>
<protein>
    <recommendedName>
        <fullName>Histone H1-gamma, late</fullName>
    </recommendedName>
</protein>
<comment type="function">
    <text>Histones H1 are necessary for the condensation of nucleosome chains into higher-order structures.</text>
</comment>
<comment type="subcellular location">
    <subcellularLocation>
        <location>Nucleus</location>
    </subcellularLocation>
    <subcellularLocation>
        <location>Chromosome</location>
    </subcellularLocation>
</comment>
<comment type="similarity">
    <text evidence="1">Belongs to the histone H1/H5 family.</text>
</comment>
<proteinExistence type="inferred from homology"/>
<dbReference type="EMBL" id="M16033">
    <property type="protein sequence ID" value="AAA30059.1"/>
    <property type="molecule type" value="Genomic_DNA"/>
</dbReference>
<dbReference type="PIR" id="A26721">
    <property type="entry name" value="A26721"/>
</dbReference>
<dbReference type="RefSeq" id="NP_999720.1">
    <property type="nucleotide sequence ID" value="NM_214555.1"/>
</dbReference>
<dbReference type="SMR" id="P07796"/>
<dbReference type="FunCoup" id="P07796">
    <property type="interactions" value="1427"/>
</dbReference>
<dbReference type="STRING" id="7668.P07796"/>
<dbReference type="EnsemblMetazoa" id="NM_214555">
    <property type="protein sequence ID" value="NP_999720"/>
    <property type="gene ID" value="LOC373350"/>
</dbReference>
<dbReference type="GeneID" id="373350"/>
<dbReference type="KEGG" id="spu:373350"/>
<dbReference type="eggNOG" id="KOG4012">
    <property type="taxonomic scope" value="Eukaryota"/>
</dbReference>
<dbReference type="HOGENOM" id="CLU_052897_1_2_1"/>
<dbReference type="InParanoid" id="P07796"/>
<dbReference type="OMA" id="THIKKCV"/>
<dbReference type="OrthoDB" id="8251629at2759"/>
<dbReference type="PhylomeDB" id="P07796"/>
<dbReference type="Proteomes" id="UP000007110">
    <property type="component" value="Unassembled WGS sequence"/>
</dbReference>
<dbReference type="GO" id="GO:0000786">
    <property type="term" value="C:nucleosome"/>
    <property type="evidence" value="ECO:0007669"/>
    <property type="project" value="InterPro"/>
</dbReference>
<dbReference type="GO" id="GO:0005634">
    <property type="term" value="C:nucleus"/>
    <property type="evidence" value="ECO:0000318"/>
    <property type="project" value="GO_Central"/>
</dbReference>
<dbReference type="GO" id="GO:0003690">
    <property type="term" value="F:double-stranded DNA binding"/>
    <property type="evidence" value="ECO:0000318"/>
    <property type="project" value="GO_Central"/>
</dbReference>
<dbReference type="GO" id="GO:0031492">
    <property type="term" value="F:nucleosomal DNA binding"/>
    <property type="evidence" value="ECO:0000318"/>
    <property type="project" value="GO_Central"/>
</dbReference>
<dbReference type="GO" id="GO:0030527">
    <property type="term" value="F:structural constituent of chromatin"/>
    <property type="evidence" value="ECO:0007669"/>
    <property type="project" value="InterPro"/>
</dbReference>
<dbReference type="GO" id="GO:0030261">
    <property type="term" value="P:chromosome condensation"/>
    <property type="evidence" value="ECO:0000318"/>
    <property type="project" value="GO_Central"/>
</dbReference>
<dbReference type="GO" id="GO:0045910">
    <property type="term" value="P:negative regulation of DNA recombination"/>
    <property type="evidence" value="ECO:0000318"/>
    <property type="project" value="GO_Central"/>
</dbReference>
<dbReference type="GO" id="GO:0006334">
    <property type="term" value="P:nucleosome assembly"/>
    <property type="evidence" value="ECO:0007669"/>
    <property type="project" value="InterPro"/>
</dbReference>
<dbReference type="CDD" id="cd00073">
    <property type="entry name" value="H15"/>
    <property type="match status" value="1"/>
</dbReference>
<dbReference type="FunFam" id="1.10.10.10:FF:000140">
    <property type="entry name" value="Histone H1.0"/>
    <property type="match status" value="1"/>
</dbReference>
<dbReference type="Gene3D" id="1.10.10.10">
    <property type="entry name" value="Winged helix-like DNA-binding domain superfamily/Winged helix DNA-binding domain"/>
    <property type="match status" value="1"/>
</dbReference>
<dbReference type="InterPro" id="IPR005819">
    <property type="entry name" value="H1/H5"/>
</dbReference>
<dbReference type="InterPro" id="IPR005818">
    <property type="entry name" value="Histone_H1/H5_H15"/>
</dbReference>
<dbReference type="InterPro" id="IPR036388">
    <property type="entry name" value="WH-like_DNA-bd_sf"/>
</dbReference>
<dbReference type="InterPro" id="IPR036390">
    <property type="entry name" value="WH_DNA-bd_sf"/>
</dbReference>
<dbReference type="Pfam" id="PF00538">
    <property type="entry name" value="Linker_histone"/>
    <property type="match status" value="1"/>
</dbReference>
<dbReference type="PRINTS" id="PR00624">
    <property type="entry name" value="HISTONEH5"/>
</dbReference>
<dbReference type="SMART" id="SM00526">
    <property type="entry name" value="H15"/>
    <property type="match status" value="1"/>
</dbReference>
<dbReference type="SUPFAM" id="SSF46785">
    <property type="entry name" value="Winged helix' DNA-binding domain"/>
    <property type="match status" value="1"/>
</dbReference>
<dbReference type="PROSITE" id="PS51504">
    <property type="entry name" value="H15"/>
    <property type="match status" value="1"/>
</dbReference>
<reference key="1">
    <citation type="journal article" date="1987" name="Mol. Cell. Biol.">
        <title>Isolation, characterization, and expression of the gene encoding the late histone subtype H1-gamma of the sea urchin Strongylocentrotus purpuratus.</title>
        <authorList>
            <person name="Knowles J.A."/>
            <person name="Lai Z.-C."/>
            <person name="Childs G.J."/>
        </authorList>
    </citation>
    <scope>NUCLEOTIDE SEQUENCE [GENOMIC DNA]</scope>
</reference>
<accession>P07796</accession>
<evidence type="ECO:0000255" key="1">
    <source>
        <dbReference type="PROSITE-ProRule" id="PRU00837"/>
    </source>
</evidence>
<evidence type="ECO:0000256" key="2">
    <source>
        <dbReference type="SAM" id="MobiDB-lite"/>
    </source>
</evidence>